<dbReference type="EMBL" id="AE005674">
    <property type="protein sequence ID" value="AAN43911.2"/>
    <property type="molecule type" value="Genomic_DNA"/>
</dbReference>
<dbReference type="EMBL" id="AE014073">
    <property type="protein sequence ID" value="AAP17729.1"/>
    <property type="molecule type" value="Genomic_DNA"/>
</dbReference>
<dbReference type="RefSeq" id="NP_708204.2">
    <property type="nucleotide sequence ID" value="NC_004337.2"/>
</dbReference>
<dbReference type="RefSeq" id="WP_000127805.1">
    <property type="nucleotide sequence ID" value="NZ_WPGW01000016.1"/>
</dbReference>
<dbReference type="SMR" id="P59194"/>
<dbReference type="STRING" id="198214.SF2398"/>
<dbReference type="PaxDb" id="198214-SF2398"/>
<dbReference type="GeneID" id="1025531"/>
<dbReference type="KEGG" id="sfl:SF2398"/>
<dbReference type="KEGG" id="sfx:S2533"/>
<dbReference type="PATRIC" id="fig|198214.7.peg.2865"/>
<dbReference type="HOGENOM" id="CLU_001265_10_3_6"/>
<dbReference type="Proteomes" id="UP000001006">
    <property type="component" value="Chromosome"/>
</dbReference>
<dbReference type="Proteomes" id="UP000002673">
    <property type="component" value="Chromosome"/>
</dbReference>
<dbReference type="GO" id="GO:0005886">
    <property type="term" value="C:plasma membrane"/>
    <property type="evidence" value="ECO:0007669"/>
    <property type="project" value="UniProtKB-SubCell"/>
</dbReference>
<dbReference type="GO" id="GO:0022857">
    <property type="term" value="F:transmembrane transporter activity"/>
    <property type="evidence" value="ECO:0007669"/>
    <property type="project" value="UniProtKB-UniRule"/>
</dbReference>
<dbReference type="CDD" id="cd17489">
    <property type="entry name" value="MFS_YfcJ_like"/>
    <property type="match status" value="1"/>
</dbReference>
<dbReference type="FunFam" id="1.20.1250.20:FF:000269">
    <property type="entry name" value="Uncharacterized MFS-type transporter YfcJ"/>
    <property type="match status" value="1"/>
</dbReference>
<dbReference type="Gene3D" id="1.20.1250.20">
    <property type="entry name" value="MFS general substrate transporter like domains"/>
    <property type="match status" value="1"/>
</dbReference>
<dbReference type="HAMAP" id="MF_02091">
    <property type="entry name" value="MFS_YfcJ"/>
    <property type="match status" value="1"/>
</dbReference>
<dbReference type="InterPro" id="IPR011701">
    <property type="entry name" value="MFS"/>
</dbReference>
<dbReference type="InterPro" id="IPR020846">
    <property type="entry name" value="MFS_dom"/>
</dbReference>
<dbReference type="InterPro" id="IPR036259">
    <property type="entry name" value="MFS_trans_sf"/>
</dbReference>
<dbReference type="InterPro" id="IPR050171">
    <property type="entry name" value="MFS_Transporters"/>
</dbReference>
<dbReference type="InterPro" id="IPR037541">
    <property type="entry name" value="MFS_YfcJ"/>
</dbReference>
<dbReference type="NCBIfam" id="NF003477">
    <property type="entry name" value="PRK05122.1"/>
    <property type="match status" value="1"/>
</dbReference>
<dbReference type="NCBIfam" id="NF009048">
    <property type="entry name" value="PRK12382.1"/>
    <property type="match status" value="1"/>
</dbReference>
<dbReference type="PANTHER" id="PTHR23517:SF1">
    <property type="match status" value="1"/>
</dbReference>
<dbReference type="PANTHER" id="PTHR23517">
    <property type="entry name" value="RESISTANCE PROTEIN MDTM, PUTATIVE-RELATED-RELATED"/>
    <property type="match status" value="1"/>
</dbReference>
<dbReference type="Pfam" id="PF07690">
    <property type="entry name" value="MFS_1"/>
    <property type="match status" value="1"/>
</dbReference>
<dbReference type="SUPFAM" id="SSF103473">
    <property type="entry name" value="MFS general substrate transporter"/>
    <property type="match status" value="1"/>
</dbReference>
<dbReference type="PROSITE" id="PS50850">
    <property type="entry name" value="MFS"/>
    <property type="match status" value="1"/>
</dbReference>
<gene>
    <name evidence="1" type="primary">yfcJ</name>
    <name type="ordered locus">SF2398</name>
    <name type="ordered locus">S2533</name>
</gene>
<proteinExistence type="inferred from homology"/>
<keyword id="KW-0997">Cell inner membrane</keyword>
<keyword id="KW-1003">Cell membrane</keyword>
<keyword id="KW-0472">Membrane</keyword>
<keyword id="KW-1185">Reference proteome</keyword>
<keyword id="KW-0812">Transmembrane</keyword>
<keyword id="KW-1133">Transmembrane helix</keyword>
<keyword id="KW-0813">Transport</keyword>
<organism>
    <name type="scientific">Shigella flexneri</name>
    <dbReference type="NCBI Taxonomy" id="623"/>
    <lineage>
        <taxon>Bacteria</taxon>
        <taxon>Pseudomonadati</taxon>
        <taxon>Pseudomonadota</taxon>
        <taxon>Gammaproteobacteria</taxon>
        <taxon>Enterobacterales</taxon>
        <taxon>Enterobacteriaceae</taxon>
        <taxon>Shigella</taxon>
    </lineage>
</organism>
<accession>P59194</accession>
<name>YFCJ_SHIFL</name>
<evidence type="ECO:0000255" key="1">
    <source>
        <dbReference type="HAMAP-Rule" id="MF_02091"/>
    </source>
</evidence>
<sequence length="392" mass="40468">MTAVSQTETRSSASFSLFRISFAVFLTYMTVGLPLPVIPLFVHHDLGYGNTMVGIAVGIQFLATVLTRGYAGRLADQYGAKRSALQGMLACGLAGGALLLAAILPVSAPFKFALLVIGRLILGFGESQLLTGALTWGLGIVGPKHSGKVMSWNGMAIYGALAVGAPLGLLIHSHYGFAALAITTMVLPLLAWACNGTVRKVPALAGERPSLWSVVGLIWKPGLGLALQGVGFAVIGTFVSLYFASKGWAMAGFTLTAFGGAFVVMRVMFGWMPDRFGGVKVAIVSLLVETVGLLLLWQAPGAWVALAGAALTGAGCSLIFPALGVEVVKRVPSQVRGTALGGYAAFQDIALGVSGPLAGMLATTFGYSSVFLAGAISAVLGIIVTILSFRRG</sequence>
<reference key="1">
    <citation type="journal article" date="2002" name="Nucleic Acids Res.">
        <title>Genome sequence of Shigella flexneri 2a: insights into pathogenicity through comparison with genomes of Escherichia coli K12 and O157.</title>
        <authorList>
            <person name="Jin Q."/>
            <person name="Yuan Z."/>
            <person name="Xu J."/>
            <person name="Wang Y."/>
            <person name="Shen Y."/>
            <person name="Lu W."/>
            <person name="Wang J."/>
            <person name="Liu H."/>
            <person name="Yang J."/>
            <person name="Yang F."/>
            <person name="Zhang X."/>
            <person name="Zhang J."/>
            <person name="Yang G."/>
            <person name="Wu H."/>
            <person name="Qu D."/>
            <person name="Dong J."/>
            <person name="Sun L."/>
            <person name="Xue Y."/>
            <person name="Zhao A."/>
            <person name="Gao Y."/>
            <person name="Zhu J."/>
            <person name="Kan B."/>
            <person name="Ding K."/>
            <person name="Chen S."/>
            <person name="Cheng H."/>
            <person name="Yao Z."/>
            <person name="He B."/>
            <person name="Chen R."/>
            <person name="Ma D."/>
            <person name="Qiang B."/>
            <person name="Wen Y."/>
            <person name="Hou Y."/>
            <person name="Yu J."/>
        </authorList>
    </citation>
    <scope>NUCLEOTIDE SEQUENCE [LARGE SCALE GENOMIC DNA]</scope>
    <source>
        <strain>301 / Serotype 2a</strain>
    </source>
</reference>
<reference key="2">
    <citation type="journal article" date="2003" name="Infect. Immun.">
        <title>Complete genome sequence and comparative genomics of Shigella flexneri serotype 2a strain 2457T.</title>
        <authorList>
            <person name="Wei J."/>
            <person name="Goldberg M.B."/>
            <person name="Burland V."/>
            <person name="Venkatesan M.M."/>
            <person name="Deng W."/>
            <person name="Fournier G."/>
            <person name="Mayhew G.F."/>
            <person name="Plunkett G. III"/>
            <person name="Rose D.J."/>
            <person name="Darling A."/>
            <person name="Mau B."/>
            <person name="Perna N.T."/>
            <person name="Payne S.M."/>
            <person name="Runyen-Janecky L.J."/>
            <person name="Zhou S."/>
            <person name="Schwartz D.C."/>
            <person name="Blattner F.R."/>
        </authorList>
    </citation>
    <scope>NUCLEOTIDE SEQUENCE [LARGE SCALE GENOMIC DNA]</scope>
    <source>
        <strain>ATCC 700930 / 2457T / Serotype 2a</strain>
    </source>
</reference>
<protein>
    <recommendedName>
        <fullName evidence="1">Uncharacterized MFS-type transporter YfcJ</fullName>
    </recommendedName>
</protein>
<feature type="chain" id="PRO_0000087805" description="Uncharacterized MFS-type transporter YfcJ">
    <location>
        <begin position="1"/>
        <end position="392"/>
    </location>
</feature>
<feature type="transmembrane region" description="Helical" evidence="1">
    <location>
        <begin position="22"/>
        <end position="42"/>
    </location>
</feature>
<feature type="transmembrane region" description="Helical" evidence="1">
    <location>
        <begin position="46"/>
        <end position="66"/>
    </location>
</feature>
<feature type="transmembrane region" description="Helical" evidence="1">
    <location>
        <begin position="97"/>
        <end position="117"/>
    </location>
</feature>
<feature type="transmembrane region" description="Helical" evidence="1">
    <location>
        <begin position="121"/>
        <end position="141"/>
    </location>
</feature>
<feature type="transmembrane region" description="Helical" evidence="1">
    <location>
        <begin position="151"/>
        <end position="171"/>
    </location>
</feature>
<feature type="transmembrane region" description="Helical" evidence="1">
    <location>
        <begin position="174"/>
        <end position="194"/>
    </location>
</feature>
<feature type="transmembrane region" description="Helical" evidence="1">
    <location>
        <begin position="223"/>
        <end position="243"/>
    </location>
</feature>
<feature type="transmembrane region" description="Helical" evidence="1">
    <location>
        <begin position="252"/>
        <end position="272"/>
    </location>
</feature>
<feature type="transmembrane region" description="Helical" evidence="1">
    <location>
        <begin position="276"/>
        <end position="298"/>
    </location>
</feature>
<feature type="transmembrane region" description="Helical" evidence="1">
    <location>
        <begin position="342"/>
        <end position="362"/>
    </location>
</feature>
<feature type="transmembrane region" description="Helical" evidence="1">
    <location>
        <begin position="369"/>
        <end position="389"/>
    </location>
</feature>
<comment type="subcellular location">
    <subcellularLocation>
        <location evidence="1">Cell inner membrane</location>
        <topology evidence="1">Multi-pass membrane protein</topology>
    </subcellularLocation>
</comment>
<comment type="similarity">
    <text evidence="1">Belongs to the major facilitator superfamily. YfcJ family.</text>
</comment>